<accession>A5D1I2</accession>
<comment type="similarity">
    <text evidence="1">Belongs to the UPF0102 family.</text>
</comment>
<gene>
    <name type="ordered locus">PTH_1707</name>
</gene>
<proteinExistence type="inferred from homology"/>
<sequence length="120" mass="13737">MADARKLLGRMGEEAAARYLEKKGCRILSRNHCCRLGELDLVVSDGDVLVFVEVRARTGEEYGLAQESITGRKKSRLRLLAWQYLKEKGKTGSMCRFDVIAVLFDREGRVKRLEHFENAF</sequence>
<name>Y1707_PELTS</name>
<evidence type="ECO:0000255" key="1">
    <source>
        <dbReference type="HAMAP-Rule" id="MF_00048"/>
    </source>
</evidence>
<keyword id="KW-1185">Reference proteome</keyword>
<reference key="1">
    <citation type="journal article" date="2008" name="Genome Res.">
        <title>The genome of Pelotomaculum thermopropionicum reveals niche-associated evolution in anaerobic microbiota.</title>
        <authorList>
            <person name="Kosaka T."/>
            <person name="Kato S."/>
            <person name="Shimoyama T."/>
            <person name="Ishii S."/>
            <person name="Abe T."/>
            <person name="Watanabe K."/>
        </authorList>
    </citation>
    <scope>NUCLEOTIDE SEQUENCE [LARGE SCALE GENOMIC DNA]</scope>
    <source>
        <strain>DSM 13744 / JCM 10971 / SI</strain>
    </source>
</reference>
<organism>
    <name type="scientific">Pelotomaculum thermopropionicum (strain DSM 13744 / JCM 10971 / SI)</name>
    <dbReference type="NCBI Taxonomy" id="370438"/>
    <lineage>
        <taxon>Bacteria</taxon>
        <taxon>Bacillati</taxon>
        <taxon>Bacillota</taxon>
        <taxon>Clostridia</taxon>
        <taxon>Eubacteriales</taxon>
        <taxon>Desulfotomaculaceae</taxon>
        <taxon>Pelotomaculum</taxon>
    </lineage>
</organism>
<feature type="chain" id="PRO_1000074816" description="UPF0102 protein PTH_1707">
    <location>
        <begin position="1"/>
        <end position="120"/>
    </location>
</feature>
<protein>
    <recommendedName>
        <fullName evidence="1">UPF0102 protein PTH_1707</fullName>
    </recommendedName>
</protein>
<dbReference type="EMBL" id="AP009389">
    <property type="protein sequence ID" value="BAF59888.1"/>
    <property type="molecule type" value="Genomic_DNA"/>
</dbReference>
<dbReference type="SMR" id="A5D1I2"/>
<dbReference type="STRING" id="370438.PTH_1707"/>
<dbReference type="KEGG" id="pth:PTH_1707"/>
<dbReference type="eggNOG" id="COG0792">
    <property type="taxonomic scope" value="Bacteria"/>
</dbReference>
<dbReference type="HOGENOM" id="CLU_115353_2_3_9"/>
<dbReference type="Proteomes" id="UP000006556">
    <property type="component" value="Chromosome"/>
</dbReference>
<dbReference type="GO" id="GO:0003676">
    <property type="term" value="F:nucleic acid binding"/>
    <property type="evidence" value="ECO:0007669"/>
    <property type="project" value="InterPro"/>
</dbReference>
<dbReference type="Gene3D" id="3.40.1350.10">
    <property type="match status" value="1"/>
</dbReference>
<dbReference type="HAMAP" id="MF_00048">
    <property type="entry name" value="UPF0102"/>
    <property type="match status" value="1"/>
</dbReference>
<dbReference type="InterPro" id="IPR011335">
    <property type="entry name" value="Restrct_endonuc-II-like"/>
</dbReference>
<dbReference type="InterPro" id="IPR011856">
    <property type="entry name" value="tRNA_endonuc-like_dom_sf"/>
</dbReference>
<dbReference type="InterPro" id="IPR003509">
    <property type="entry name" value="UPF0102_YraN-like"/>
</dbReference>
<dbReference type="NCBIfam" id="NF009150">
    <property type="entry name" value="PRK12497.1-3"/>
    <property type="match status" value="1"/>
</dbReference>
<dbReference type="NCBIfam" id="NF009154">
    <property type="entry name" value="PRK12497.3-3"/>
    <property type="match status" value="1"/>
</dbReference>
<dbReference type="NCBIfam" id="TIGR00252">
    <property type="entry name" value="YraN family protein"/>
    <property type="match status" value="1"/>
</dbReference>
<dbReference type="PANTHER" id="PTHR34039">
    <property type="entry name" value="UPF0102 PROTEIN YRAN"/>
    <property type="match status" value="1"/>
</dbReference>
<dbReference type="PANTHER" id="PTHR34039:SF1">
    <property type="entry name" value="UPF0102 PROTEIN YRAN"/>
    <property type="match status" value="1"/>
</dbReference>
<dbReference type="Pfam" id="PF02021">
    <property type="entry name" value="UPF0102"/>
    <property type="match status" value="1"/>
</dbReference>
<dbReference type="SUPFAM" id="SSF52980">
    <property type="entry name" value="Restriction endonuclease-like"/>
    <property type="match status" value="1"/>
</dbReference>